<sequence length="318" mass="36280">MDLRAEQQQYNPYRIFSRSEWAKLRDDMPMTLAADEIAALRSMHDRLDLTEVEEIYLPLSRLLSIYVASMQRLFVAQRRFLGIQDRKVPYIIGVAGSVAVGKSTTARVLQALLARWSPGPKVDLITTDGFLFPNAVLERHGLMQKKGFPESYKLPMLLAFLSDIKAGRAPVRAPVYSHLTYDIVPKSWIEVSQPDILIVEGVNVLQTGRLPRDGRAVPVVSDFFDFSVYLDAEEPVLRDWYVKRFLALRDTAFHDPRSYFHRYALLSDDEATATAIAIWERTNRANLEDNILPTRPRATLILKKGADHVVEQVALRRL</sequence>
<feature type="chain" id="PRO_1000043235" description="Pantothenate kinase">
    <location>
        <begin position="1"/>
        <end position="318"/>
    </location>
</feature>
<feature type="binding site" evidence="1">
    <location>
        <begin position="96"/>
        <end position="103"/>
    </location>
    <ligand>
        <name>ATP</name>
        <dbReference type="ChEBI" id="CHEBI:30616"/>
    </ligand>
</feature>
<comment type="catalytic activity">
    <reaction evidence="1">
        <text>(R)-pantothenate + ATP = (R)-4'-phosphopantothenate + ADP + H(+)</text>
        <dbReference type="Rhea" id="RHEA:16373"/>
        <dbReference type="ChEBI" id="CHEBI:10986"/>
        <dbReference type="ChEBI" id="CHEBI:15378"/>
        <dbReference type="ChEBI" id="CHEBI:29032"/>
        <dbReference type="ChEBI" id="CHEBI:30616"/>
        <dbReference type="ChEBI" id="CHEBI:456216"/>
        <dbReference type="EC" id="2.7.1.33"/>
    </reaction>
</comment>
<comment type="pathway">
    <text evidence="1">Cofactor biosynthesis; coenzyme A biosynthesis; CoA from (R)-pantothenate: step 1/5.</text>
</comment>
<comment type="subcellular location">
    <subcellularLocation>
        <location evidence="1">Cytoplasm</location>
    </subcellularLocation>
</comment>
<comment type="similarity">
    <text evidence="1">Belongs to the prokaryotic pantothenate kinase family.</text>
</comment>
<organism>
    <name type="scientific">Nitrobacter hamburgensis (strain DSM 10229 / NCIMB 13809 / X14)</name>
    <dbReference type="NCBI Taxonomy" id="323097"/>
    <lineage>
        <taxon>Bacteria</taxon>
        <taxon>Pseudomonadati</taxon>
        <taxon>Pseudomonadota</taxon>
        <taxon>Alphaproteobacteria</taxon>
        <taxon>Hyphomicrobiales</taxon>
        <taxon>Nitrobacteraceae</taxon>
        <taxon>Nitrobacter</taxon>
    </lineage>
</organism>
<name>COAA_NITHX</name>
<evidence type="ECO:0000255" key="1">
    <source>
        <dbReference type="HAMAP-Rule" id="MF_00215"/>
    </source>
</evidence>
<keyword id="KW-0067">ATP-binding</keyword>
<keyword id="KW-0173">Coenzyme A biosynthesis</keyword>
<keyword id="KW-0963">Cytoplasm</keyword>
<keyword id="KW-0418">Kinase</keyword>
<keyword id="KW-0547">Nucleotide-binding</keyword>
<keyword id="KW-1185">Reference proteome</keyword>
<keyword id="KW-0808">Transferase</keyword>
<gene>
    <name evidence="1" type="primary">coaA</name>
    <name type="ordered locus">Nham_0128</name>
</gene>
<reference key="1">
    <citation type="submission" date="2006-03" db="EMBL/GenBank/DDBJ databases">
        <title>Complete sequence of chromosome of Nitrobacter hamburgensis X14.</title>
        <authorList>
            <consortium name="US DOE Joint Genome Institute"/>
            <person name="Copeland A."/>
            <person name="Lucas S."/>
            <person name="Lapidus A."/>
            <person name="Barry K."/>
            <person name="Detter J.C."/>
            <person name="Glavina del Rio T."/>
            <person name="Hammon N."/>
            <person name="Israni S."/>
            <person name="Dalin E."/>
            <person name="Tice H."/>
            <person name="Pitluck S."/>
            <person name="Chain P."/>
            <person name="Malfatti S."/>
            <person name="Shin M."/>
            <person name="Vergez L."/>
            <person name="Schmutz J."/>
            <person name="Larimer F."/>
            <person name="Land M."/>
            <person name="Hauser L."/>
            <person name="Kyrpides N."/>
            <person name="Ivanova N."/>
            <person name="Ward B."/>
            <person name="Arp D."/>
            <person name="Klotz M."/>
            <person name="Stein L."/>
            <person name="O'Mullan G."/>
            <person name="Starkenburg S."/>
            <person name="Sayavedra L."/>
            <person name="Poret-Peterson A.T."/>
            <person name="Gentry M.E."/>
            <person name="Bruce D."/>
            <person name="Richardson P."/>
        </authorList>
    </citation>
    <scope>NUCLEOTIDE SEQUENCE [LARGE SCALE GENOMIC DNA]</scope>
    <source>
        <strain>DSM 10229 / NCIMB 13809 / X14</strain>
    </source>
</reference>
<accession>Q1QRW8</accession>
<dbReference type="EC" id="2.7.1.33" evidence="1"/>
<dbReference type="EMBL" id="CP000319">
    <property type="protein sequence ID" value="ABE61029.1"/>
    <property type="molecule type" value="Genomic_DNA"/>
</dbReference>
<dbReference type="RefSeq" id="WP_011508736.1">
    <property type="nucleotide sequence ID" value="NC_007964.1"/>
</dbReference>
<dbReference type="SMR" id="Q1QRW8"/>
<dbReference type="STRING" id="323097.Nham_0128"/>
<dbReference type="KEGG" id="nha:Nham_0128"/>
<dbReference type="eggNOG" id="COG1072">
    <property type="taxonomic scope" value="Bacteria"/>
</dbReference>
<dbReference type="HOGENOM" id="CLU_053818_1_1_5"/>
<dbReference type="OrthoDB" id="1550976at2"/>
<dbReference type="UniPathway" id="UPA00241">
    <property type="reaction ID" value="UER00352"/>
</dbReference>
<dbReference type="Proteomes" id="UP000001953">
    <property type="component" value="Chromosome"/>
</dbReference>
<dbReference type="GO" id="GO:0005737">
    <property type="term" value="C:cytoplasm"/>
    <property type="evidence" value="ECO:0007669"/>
    <property type="project" value="UniProtKB-SubCell"/>
</dbReference>
<dbReference type="GO" id="GO:0005524">
    <property type="term" value="F:ATP binding"/>
    <property type="evidence" value="ECO:0007669"/>
    <property type="project" value="UniProtKB-UniRule"/>
</dbReference>
<dbReference type="GO" id="GO:0004594">
    <property type="term" value="F:pantothenate kinase activity"/>
    <property type="evidence" value="ECO:0007669"/>
    <property type="project" value="UniProtKB-UniRule"/>
</dbReference>
<dbReference type="GO" id="GO:0015937">
    <property type="term" value="P:coenzyme A biosynthetic process"/>
    <property type="evidence" value="ECO:0007669"/>
    <property type="project" value="UniProtKB-UniRule"/>
</dbReference>
<dbReference type="CDD" id="cd02025">
    <property type="entry name" value="PanK"/>
    <property type="match status" value="1"/>
</dbReference>
<dbReference type="Gene3D" id="3.40.50.300">
    <property type="entry name" value="P-loop containing nucleotide triphosphate hydrolases"/>
    <property type="match status" value="1"/>
</dbReference>
<dbReference type="HAMAP" id="MF_00215">
    <property type="entry name" value="Pantothen_kinase_1"/>
    <property type="match status" value="1"/>
</dbReference>
<dbReference type="InterPro" id="IPR027417">
    <property type="entry name" value="P-loop_NTPase"/>
</dbReference>
<dbReference type="InterPro" id="IPR004566">
    <property type="entry name" value="PanK"/>
</dbReference>
<dbReference type="InterPro" id="IPR006083">
    <property type="entry name" value="PRK/URK"/>
</dbReference>
<dbReference type="NCBIfam" id="TIGR00554">
    <property type="entry name" value="panK_bact"/>
    <property type="match status" value="1"/>
</dbReference>
<dbReference type="PANTHER" id="PTHR10285">
    <property type="entry name" value="URIDINE KINASE"/>
    <property type="match status" value="1"/>
</dbReference>
<dbReference type="Pfam" id="PF00485">
    <property type="entry name" value="PRK"/>
    <property type="match status" value="1"/>
</dbReference>
<dbReference type="PIRSF" id="PIRSF000545">
    <property type="entry name" value="Pantothenate_kin"/>
    <property type="match status" value="1"/>
</dbReference>
<dbReference type="SUPFAM" id="SSF52540">
    <property type="entry name" value="P-loop containing nucleoside triphosphate hydrolases"/>
    <property type="match status" value="1"/>
</dbReference>
<protein>
    <recommendedName>
        <fullName evidence="1">Pantothenate kinase</fullName>
        <ecNumber evidence="1">2.7.1.33</ecNumber>
    </recommendedName>
    <alternativeName>
        <fullName evidence="1">Pantothenic acid kinase</fullName>
    </alternativeName>
</protein>
<proteinExistence type="inferred from homology"/>